<protein>
    <recommendedName>
        <fullName>Uncharacterized protein MT1551</fullName>
    </recommendedName>
</protein>
<keyword id="KW-1185">Reference proteome</keyword>
<organism>
    <name type="scientific">Mycobacterium tuberculosis (strain CDC 1551 / Oshkosh)</name>
    <dbReference type="NCBI Taxonomy" id="83331"/>
    <lineage>
        <taxon>Bacteria</taxon>
        <taxon>Bacillati</taxon>
        <taxon>Actinomycetota</taxon>
        <taxon>Actinomycetes</taxon>
        <taxon>Mycobacteriales</taxon>
        <taxon>Mycobacteriaceae</taxon>
        <taxon>Mycobacterium</taxon>
        <taxon>Mycobacterium tuberculosis complex</taxon>
    </lineage>
</organism>
<name>Y1502_MYCTO</name>
<accession>P9WLW6</accession>
<accession>L0T9L7</accession>
<accession>P71783</accession>
<gene>
    <name type="ordered locus">MT1551</name>
</gene>
<sequence>MAWRKLGRIFAPSGELDWSRSHAALPVPEWIEGDIFRIYFSGRDGQNRSSIGSVIVDLAVGGKILDIPAEPILRPGARGMFDDCGVSIGSIVRAGDTRLLYYTGWNLAVTVPWKNTIGVAISEAGAPFERWSTFPVVALDERDPFSLSYPWVIQDGGTYRMWYGSNLGWGEGTDEIPHVIRYAQSRDGVHWEKQDRVHIDTSGSDNSAACRPCVVRDAGVYRMWFCARGAKYRIYCATSEDGLTWRQLGKDEGIDVSPDSWDSDMIEYPCVFDHRGQRFMLYSGDGYGRTGFGLAVLEN</sequence>
<dbReference type="EMBL" id="AE000516">
    <property type="protein sequence ID" value="AAK45817.1"/>
    <property type="molecule type" value="Genomic_DNA"/>
</dbReference>
<dbReference type="PIR" id="A70713">
    <property type="entry name" value="A70713"/>
</dbReference>
<dbReference type="RefSeq" id="WP_003407616.1">
    <property type="nucleotide sequence ID" value="NZ_KK341227.1"/>
</dbReference>
<dbReference type="SMR" id="P9WLW6"/>
<dbReference type="KEGG" id="mtc:MT1551"/>
<dbReference type="PATRIC" id="fig|83331.31.peg.1668"/>
<dbReference type="HOGENOM" id="CLU_078427_0_0_11"/>
<dbReference type="Proteomes" id="UP000001020">
    <property type="component" value="Chromosome"/>
</dbReference>
<dbReference type="Gene3D" id="2.115.10.20">
    <property type="entry name" value="Glycosyl hydrolase domain, family 43"/>
    <property type="match status" value="2"/>
</dbReference>
<dbReference type="InterPro" id="IPR023296">
    <property type="entry name" value="Glyco_hydro_beta-prop_sf"/>
</dbReference>
<dbReference type="PANTHER" id="PTHR35279">
    <property type="match status" value="1"/>
</dbReference>
<dbReference type="PANTHER" id="PTHR35279:SF1">
    <property type="entry name" value="ARABINANASE_LEVANSUCRASE_INVERTASE"/>
    <property type="match status" value="1"/>
</dbReference>
<dbReference type="SUPFAM" id="SSF75005">
    <property type="entry name" value="Arabinanase/levansucrase/invertase"/>
    <property type="match status" value="1"/>
</dbReference>
<proteinExistence type="predicted"/>
<feature type="chain" id="PRO_0000427407" description="Uncharacterized protein MT1551">
    <location>
        <begin position="1"/>
        <end position="299"/>
    </location>
</feature>
<reference key="1">
    <citation type="journal article" date="2002" name="J. Bacteriol.">
        <title>Whole-genome comparison of Mycobacterium tuberculosis clinical and laboratory strains.</title>
        <authorList>
            <person name="Fleischmann R.D."/>
            <person name="Alland D."/>
            <person name="Eisen J.A."/>
            <person name="Carpenter L."/>
            <person name="White O."/>
            <person name="Peterson J.D."/>
            <person name="DeBoy R.T."/>
            <person name="Dodson R.J."/>
            <person name="Gwinn M.L."/>
            <person name="Haft D.H."/>
            <person name="Hickey E.K."/>
            <person name="Kolonay J.F."/>
            <person name="Nelson W.C."/>
            <person name="Umayam L.A."/>
            <person name="Ermolaeva M.D."/>
            <person name="Salzberg S.L."/>
            <person name="Delcher A."/>
            <person name="Utterback T.R."/>
            <person name="Weidman J.F."/>
            <person name="Khouri H.M."/>
            <person name="Gill J."/>
            <person name="Mikula A."/>
            <person name="Bishai W."/>
            <person name="Jacobs W.R. Jr."/>
            <person name="Venter J.C."/>
            <person name="Fraser C.M."/>
        </authorList>
    </citation>
    <scope>NUCLEOTIDE SEQUENCE [LARGE SCALE GENOMIC DNA]</scope>
    <source>
        <strain>CDC 1551 / Oshkosh</strain>
    </source>
</reference>